<organism>
    <name type="scientific">Streptococcus pneumoniae (strain Hungary19A-6)</name>
    <dbReference type="NCBI Taxonomy" id="487214"/>
    <lineage>
        <taxon>Bacteria</taxon>
        <taxon>Bacillati</taxon>
        <taxon>Bacillota</taxon>
        <taxon>Bacilli</taxon>
        <taxon>Lactobacillales</taxon>
        <taxon>Streptococcaceae</taxon>
        <taxon>Streptococcus</taxon>
    </lineage>
</organism>
<keyword id="KW-0030">Aminoacyl-tRNA synthetase</keyword>
<keyword id="KW-0067">ATP-binding</keyword>
<keyword id="KW-0963">Cytoplasm</keyword>
<keyword id="KW-0436">Ligase</keyword>
<keyword id="KW-0547">Nucleotide-binding</keyword>
<keyword id="KW-0648">Protein biosynthesis</keyword>
<name>SYGA_STRPI</name>
<proteinExistence type="inferred from homology"/>
<sequence>MSKKLTFQEIILTLQRFWNDQGCMLMQAYDNEKGAGTMSPYTFLRAIGPEPWNAAYVEPSRRPADGRYGENPNRLYQHHQFQVVMKPSPSNIQELYLESLEKLGINPLEHDIRFVEDNWENPSTGSAGLGWEVWLDGMEITQFTYFQQVGGLATSPVTAEVTYGLERLASYIQEVDSVYDIEWADGVKYGEIFIQPEYEHSKYSFEISDQEMLLENFDKFEKEAGRALEEGLVHPAYDYVLKCSHTFNLLDARGAVSVTERAGYIARIRNLARVVAKTFVAERKRLGYPLLDEETRAKLLAEDAE</sequence>
<feature type="chain" id="PRO_1000101237" description="Glycine--tRNA ligase alpha subunit">
    <location>
        <begin position="1"/>
        <end position="305"/>
    </location>
</feature>
<reference key="1">
    <citation type="journal article" date="2010" name="Genome Biol.">
        <title>Structure and dynamics of the pan-genome of Streptococcus pneumoniae and closely related species.</title>
        <authorList>
            <person name="Donati C."/>
            <person name="Hiller N.L."/>
            <person name="Tettelin H."/>
            <person name="Muzzi A."/>
            <person name="Croucher N.J."/>
            <person name="Angiuoli S.V."/>
            <person name="Oggioni M."/>
            <person name="Dunning Hotopp J.C."/>
            <person name="Hu F.Z."/>
            <person name="Riley D.R."/>
            <person name="Covacci A."/>
            <person name="Mitchell T.J."/>
            <person name="Bentley S.D."/>
            <person name="Kilian M."/>
            <person name="Ehrlich G.D."/>
            <person name="Rappuoli R."/>
            <person name="Moxon E.R."/>
            <person name="Masignani V."/>
        </authorList>
    </citation>
    <scope>NUCLEOTIDE SEQUENCE [LARGE SCALE GENOMIC DNA]</scope>
    <source>
        <strain>Hungary19A-6</strain>
    </source>
</reference>
<dbReference type="EC" id="6.1.1.14" evidence="1"/>
<dbReference type="EMBL" id="CP000936">
    <property type="protein sequence ID" value="ACA36665.1"/>
    <property type="molecule type" value="Genomic_DNA"/>
</dbReference>
<dbReference type="RefSeq" id="WP_000038764.1">
    <property type="nucleotide sequence ID" value="NC_010380.1"/>
</dbReference>
<dbReference type="SMR" id="B1ICQ6"/>
<dbReference type="KEGG" id="spv:SPH_1591"/>
<dbReference type="HOGENOM" id="CLU_057066_1_0_9"/>
<dbReference type="Proteomes" id="UP000002163">
    <property type="component" value="Chromosome"/>
</dbReference>
<dbReference type="GO" id="GO:0005829">
    <property type="term" value="C:cytosol"/>
    <property type="evidence" value="ECO:0007669"/>
    <property type="project" value="TreeGrafter"/>
</dbReference>
<dbReference type="GO" id="GO:0005524">
    <property type="term" value="F:ATP binding"/>
    <property type="evidence" value="ECO:0007669"/>
    <property type="project" value="UniProtKB-UniRule"/>
</dbReference>
<dbReference type="GO" id="GO:0140096">
    <property type="term" value="F:catalytic activity, acting on a protein"/>
    <property type="evidence" value="ECO:0007669"/>
    <property type="project" value="UniProtKB-ARBA"/>
</dbReference>
<dbReference type="GO" id="GO:0004820">
    <property type="term" value="F:glycine-tRNA ligase activity"/>
    <property type="evidence" value="ECO:0007669"/>
    <property type="project" value="UniProtKB-UniRule"/>
</dbReference>
<dbReference type="GO" id="GO:0016740">
    <property type="term" value="F:transferase activity"/>
    <property type="evidence" value="ECO:0007669"/>
    <property type="project" value="UniProtKB-ARBA"/>
</dbReference>
<dbReference type="GO" id="GO:0006426">
    <property type="term" value="P:glycyl-tRNA aminoacylation"/>
    <property type="evidence" value="ECO:0007669"/>
    <property type="project" value="UniProtKB-UniRule"/>
</dbReference>
<dbReference type="CDD" id="cd00733">
    <property type="entry name" value="GlyRS_alpha_core"/>
    <property type="match status" value="1"/>
</dbReference>
<dbReference type="FunFam" id="3.30.930.10:FF:000006">
    <property type="entry name" value="Glycine--tRNA ligase alpha subunit"/>
    <property type="match status" value="1"/>
</dbReference>
<dbReference type="Gene3D" id="3.30.930.10">
    <property type="entry name" value="Bira Bifunctional Protein, Domain 2"/>
    <property type="match status" value="1"/>
</dbReference>
<dbReference type="Gene3D" id="1.20.58.180">
    <property type="entry name" value="Class II aaRS and biotin synthetases, domain 2"/>
    <property type="match status" value="1"/>
</dbReference>
<dbReference type="HAMAP" id="MF_00254">
    <property type="entry name" value="Gly_tRNA_synth_alpha"/>
    <property type="match status" value="1"/>
</dbReference>
<dbReference type="InterPro" id="IPR045864">
    <property type="entry name" value="aa-tRNA-synth_II/BPL/LPL"/>
</dbReference>
<dbReference type="InterPro" id="IPR006194">
    <property type="entry name" value="Gly-tRNA-synth_heterodimer"/>
</dbReference>
<dbReference type="InterPro" id="IPR002310">
    <property type="entry name" value="Gly-tRNA_ligase_asu"/>
</dbReference>
<dbReference type="NCBIfam" id="TIGR00388">
    <property type="entry name" value="glyQ"/>
    <property type="match status" value="1"/>
</dbReference>
<dbReference type="NCBIfam" id="NF006827">
    <property type="entry name" value="PRK09348.1"/>
    <property type="match status" value="1"/>
</dbReference>
<dbReference type="PANTHER" id="PTHR30075:SF2">
    <property type="entry name" value="GLYCINE--TRNA LIGASE, CHLOROPLASTIC_MITOCHONDRIAL 2"/>
    <property type="match status" value="1"/>
</dbReference>
<dbReference type="PANTHER" id="PTHR30075">
    <property type="entry name" value="GLYCYL-TRNA SYNTHETASE"/>
    <property type="match status" value="1"/>
</dbReference>
<dbReference type="Pfam" id="PF02091">
    <property type="entry name" value="tRNA-synt_2e"/>
    <property type="match status" value="1"/>
</dbReference>
<dbReference type="PRINTS" id="PR01044">
    <property type="entry name" value="TRNASYNTHGA"/>
</dbReference>
<dbReference type="SUPFAM" id="SSF55681">
    <property type="entry name" value="Class II aaRS and biotin synthetases"/>
    <property type="match status" value="1"/>
</dbReference>
<dbReference type="PROSITE" id="PS50861">
    <property type="entry name" value="AA_TRNA_LIGASE_II_GLYAB"/>
    <property type="match status" value="1"/>
</dbReference>
<gene>
    <name evidence="1" type="primary">glyQ</name>
    <name type="ordered locus">SPH_1591</name>
</gene>
<evidence type="ECO:0000255" key="1">
    <source>
        <dbReference type="HAMAP-Rule" id="MF_00254"/>
    </source>
</evidence>
<protein>
    <recommendedName>
        <fullName evidence="1">Glycine--tRNA ligase alpha subunit</fullName>
        <ecNumber evidence="1">6.1.1.14</ecNumber>
    </recommendedName>
    <alternativeName>
        <fullName evidence="1">Glycyl-tRNA synthetase alpha subunit</fullName>
        <shortName evidence="1">GlyRS</shortName>
    </alternativeName>
</protein>
<comment type="catalytic activity">
    <reaction evidence="1">
        <text>tRNA(Gly) + glycine + ATP = glycyl-tRNA(Gly) + AMP + diphosphate</text>
        <dbReference type="Rhea" id="RHEA:16013"/>
        <dbReference type="Rhea" id="RHEA-COMP:9664"/>
        <dbReference type="Rhea" id="RHEA-COMP:9683"/>
        <dbReference type="ChEBI" id="CHEBI:30616"/>
        <dbReference type="ChEBI" id="CHEBI:33019"/>
        <dbReference type="ChEBI" id="CHEBI:57305"/>
        <dbReference type="ChEBI" id="CHEBI:78442"/>
        <dbReference type="ChEBI" id="CHEBI:78522"/>
        <dbReference type="ChEBI" id="CHEBI:456215"/>
        <dbReference type="EC" id="6.1.1.14"/>
    </reaction>
</comment>
<comment type="subunit">
    <text evidence="1">Tetramer of two alpha and two beta subunits.</text>
</comment>
<comment type="subcellular location">
    <subcellularLocation>
        <location evidence="1">Cytoplasm</location>
    </subcellularLocation>
</comment>
<comment type="similarity">
    <text evidence="1">Belongs to the class-II aminoacyl-tRNA synthetase family.</text>
</comment>
<accession>B1ICQ6</accession>